<keyword id="KW-0002">3D-structure</keyword>
<keyword id="KW-0456">Lyase</keyword>
<keyword id="KW-0460">Magnesium</keyword>
<keyword id="KW-0474">Menaquinone biosynthesis</keyword>
<keyword id="KW-0479">Metal-binding</keyword>
<keyword id="KW-1185">Reference proteome</keyword>
<sequence length="320" mass="35360">MRSAQVYRWQIPMDAGVVLRDRRLKTRDGLYVCLRDGEREGWGEISPLPGFSQETWEEAQTALLTWVNDWLQGSEGLPEMPSVAFGASCALAELTGVLPEAADYRAAPLCTGDPDDLVLRLADMPGEKIAKVKVGLYEAVRDGMVVNLLLEAIPDLHLRLDANRAWTPLKAQQFAKYVNPDYRARIAFLEEPCKTRDDSRAFARETGIAIAWDESLREADFTFEAEEGVRAVVIKPTLTGSLDKVREQVAAAHALGLTAVISSSIESSLGLTQLARIAAWLTPGTLPGLDTLHLMQAQQIRPWPGSALPCLKREELERLL</sequence>
<protein>
    <recommendedName>
        <fullName evidence="1">o-succinylbenzoate synthase</fullName>
        <shortName evidence="1">OSB synthase</shortName>
        <shortName evidence="1">OSBS</shortName>
        <ecNumber evidence="1">4.2.1.113</ecNumber>
    </recommendedName>
    <alternativeName>
        <fullName evidence="1">4-(2'-carboxyphenyl)-4-oxybutyric acid synthase</fullName>
    </alternativeName>
    <alternativeName>
        <fullName evidence="1">o-succinylbenzoic acid synthase</fullName>
    </alternativeName>
</protein>
<proteinExistence type="evidence at protein level"/>
<name>MENC_SALTY</name>
<organism>
    <name type="scientific">Salmonella typhimurium (strain LT2 / SGSC1412 / ATCC 700720)</name>
    <dbReference type="NCBI Taxonomy" id="99287"/>
    <lineage>
        <taxon>Bacteria</taxon>
        <taxon>Pseudomonadati</taxon>
        <taxon>Pseudomonadota</taxon>
        <taxon>Gammaproteobacteria</taxon>
        <taxon>Enterobacterales</taxon>
        <taxon>Enterobacteriaceae</taxon>
        <taxon>Salmonella</taxon>
    </lineage>
</organism>
<accession>P58486</accession>
<evidence type="ECO:0000255" key="1">
    <source>
        <dbReference type="HAMAP-Rule" id="MF_00470"/>
    </source>
</evidence>
<evidence type="ECO:0007829" key="2">
    <source>
        <dbReference type="PDB" id="3GC2"/>
    </source>
</evidence>
<gene>
    <name evidence="1" type="primary">menC</name>
    <name type="ordered locus">STM2306</name>
</gene>
<dbReference type="EC" id="4.2.1.113" evidence="1"/>
<dbReference type="EMBL" id="AE006468">
    <property type="protein sequence ID" value="AAL21207.1"/>
    <property type="molecule type" value="Genomic_DNA"/>
</dbReference>
<dbReference type="RefSeq" id="NP_461248.1">
    <property type="nucleotide sequence ID" value="NC_003197.2"/>
</dbReference>
<dbReference type="RefSeq" id="WP_001255561.1">
    <property type="nucleotide sequence ID" value="NC_003197.2"/>
</dbReference>
<dbReference type="PDB" id="3GC2">
    <property type="method" value="X-ray"/>
    <property type="resolution" value="1.85 A"/>
    <property type="chains" value="A=1-320"/>
</dbReference>
<dbReference type="PDBsum" id="3GC2"/>
<dbReference type="SMR" id="P58486"/>
<dbReference type="STRING" id="99287.STM2306"/>
<dbReference type="PaxDb" id="99287-STM2306"/>
<dbReference type="GeneID" id="1253828"/>
<dbReference type="KEGG" id="stm:STM2306"/>
<dbReference type="PATRIC" id="fig|99287.12.peg.2441"/>
<dbReference type="HOGENOM" id="CLU_030273_0_1_6"/>
<dbReference type="OMA" id="PLCYGDP"/>
<dbReference type="PhylomeDB" id="P58486"/>
<dbReference type="BioCyc" id="SENT99287:STM2306-MONOMER"/>
<dbReference type="UniPathway" id="UPA00079"/>
<dbReference type="UniPathway" id="UPA01057">
    <property type="reaction ID" value="UER00165"/>
</dbReference>
<dbReference type="EvolutionaryTrace" id="P58486"/>
<dbReference type="Proteomes" id="UP000001014">
    <property type="component" value="Chromosome"/>
</dbReference>
<dbReference type="GO" id="GO:0016836">
    <property type="term" value="F:hydro-lyase activity"/>
    <property type="evidence" value="ECO:0000318"/>
    <property type="project" value="GO_Central"/>
</dbReference>
<dbReference type="GO" id="GO:0000287">
    <property type="term" value="F:magnesium ion binding"/>
    <property type="evidence" value="ECO:0007669"/>
    <property type="project" value="UniProtKB-UniRule"/>
</dbReference>
<dbReference type="GO" id="GO:0043748">
    <property type="term" value="F:O-succinylbenzoate synthase activity"/>
    <property type="evidence" value="ECO:0007669"/>
    <property type="project" value="UniProtKB-EC"/>
</dbReference>
<dbReference type="GO" id="GO:0009234">
    <property type="term" value="P:menaquinone biosynthetic process"/>
    <property type="evidence" value="ECO:0000318"/>
    <property type="project" value="GO_Central"/>
</dbReference>
<dbReference type="CDD" id="cd03320">
    <property type="entry name" value="OSBS"/>
    <property type="match status" value="1"/>
</dbReference>
<dbReference type="FunFam" id="3.20.20.120:FF:000006">
    <property type="entry name" value="o-succinylbenzoate synthase"/>
    <property type="match status" value="1"/>
</dbReference>
<dbReference type="Gene3D" id="3.20.20.120">
    <property type="entry name" value="Enolase-like C-terminal domain"/>
    <property type="match status" value="1"/>
</dbReference>
<dbReference type="Gene3D" id="3.30.390.10">
    <property type="entry name" value="Enolase-like, N-terminal domain"/>
    <property type="match status" value="1"/>
</dbReference>
<dbReference type="HAMAP" id="MF_00470">
    <property type="entry name" value="MenC_1"/>
    <property type="match status" value="1"/>
</dbReference>
<dbReference type="InterPro" id="IPR036849">
    <property type="entry name" value="Enolase-like_C_sf"/>
</dbReference>
<dbReference type="InterPro" id="IPR029017">
    <property type="entry name" value="Enolase-like_N"/>
</dbReference>
<dbReference type="InterPro" id="IPR029065">
    <property type="entry name" value="Enolase_C-like"/>
</dbReference>
<dbReference type="InterPro" id="IPR013342">
    <property type="entry name" value="Mandelate_racemase_C"/>
</dbReference>
<dbReference type="InterPro" id="IPR010196">
    <property type="entry name" value="OSB_synthase_MenC1"/>
</dbReference>
<dbReference type="InterPro" id="IPR041338">
    <property type="entry name" value="OSBS_N"/>
</dbReference>
<dbReference type="NCBIfam" id="TIGR01927">
    <property type="entry name" value="menC_gam_Gplu"/>
    <property type="match status" value="1"/>
</dbReference>
<dbReference type="NCBIfam" id="NF003473">
    <property type="entry name" value="PRK05105.1"/>
    <property type="match status" value="1"/>
</dbReference>
<dbReference type="PANTHER" id="PTHR48073:SF2">
    <property type="entry name" value="O-SUCCINYLBENZOATE SYNTHASE"/>
    <property type="match status" value="1"/>
</dbReference>
<dbReference type="PANTHER" id="PTHR48073">
    <property type="entry name" value="O-SUCCINYLBENZOATE SYNTHASE-RELATED"/>
    <property type="match status" value="1"/>
</dbReference>
<dbReference type="Pfam" id="PF21508">
    <property type="entry name" value="MenC_N"/>
    <property type="match status" value="1"/>
</dbReference>
<dbReference type="Pfam" id="PF13378">
    <property type="entry name" value="MR_MLE_C"/>
    <property type="match status" value="1"/>
</dbReference>
<dbReference type="SFLD" id="SFLDS00001">
    <property type="entry name" value="Enolase"/>
    <property type="match status" value="1"/>
</dbReference>
<dbReference type="SFLD" id="SFLDF00009">
    <property type="entry name" value="o-succinylbenzoate_synthase"/>
    <property type="match status" value="1"/>
</dbReference>
<dbReference type="SMART" id="SM00922">
    <property type="entry name" value="MR_MLE"/>
    <property type="match status" value="1"/>
</dbReference>
<dbReference type="SUPFAM" id="SSF51604">
    <property type="entry name" value="Enolase C-terminal domain-like"/>
    <property type="match status" value="1"/>
</dbReference>
<dbReference type="SUPFAM" id="SSF54826">
    <property type="entry name" value="Enolase N-terminal domain-like"/>
    <property type="match status" value="1"/>
</dbReference>
<reference key="1">
    <citation type="journal article" date="2001" name="Nature">
        <title>Complete genome sequence of Salmonella enterica serovar Typhimurium LT2.</title>
        <authorList>
            <person name="McClelland M."/>
            <person name="Sanderson K.E."/>
            <person name="Spieth J."/>
            <person name="Clifton S.W."/>
            <person name="Latreille P."/>
            <person name="Courtney L."/>
            <person name="Porwollik S."/>
            <person name="Ali J."/>
            <person name="Dante M."/>
            <person name="Du F."/>
            <person name="Hou S."/>
            <person name="Layman D."/>
            <person name="Leonard S."/>
            <person name="Nguyen C."/>
            <person name="Scott K."/>
            <person name="Holmes A."/>
            <person name="Grewal N."/>
            <person name="Mulvaney E."/>
            <person name="Ryan E."/>
            <person name="Sun H."/>
            <person name="Florea L."/>
            <person name="Miller W."/>
            <person name="Stoneking T."/>
            <person name="Nhan M."/>
            <person name="Waterston R."/>
            <person name="Wilson R.K."/>
        </authorList>
    </citation>
    <scope>NUCLEOTIDE SEQUENCE [LARGE SCALE GENOMIC DNA]</scope>
    <source>
        <strain>LT2 / SGSC1412 / ATCC 700720</strain>
    </source>
</reference>
<feature type="chain" id="PRO_0000171275" description="o-succinylbenzoate synthase">
    <location>
        <begin position="1"/>
        <end position="320"/>
    </location>
</feature>
<feature type="active site" description="Proton donor" evidence="1">
    <location>
        <position position="133"/>
    </location>
</feature>
<feature type="active site" description="Proton acceptor" evidence="1">
    <location>
        <position position="235"/>
    </location>
</feature>
<feature type="binding site" evidence="1">
    <location>
        <position position="161"/>
    </location>
    <ligand>
        <name>Mg(2+)</name>
        <dbReference type="ChEBI" id="CHEBI:18420"/>
    </ligand>
</feature>
<feature type="binding site" evidence="1">
    <location>
        <position position="190"/>
    </location>
    <ligand>
        <name>Mg(2+)</name>
        <dbReference type="ChEBI" id="CHEBI:18420"/>
    </ligand>
</feature>
<feature type="binding site" evidence="1">
    <location>
        <position position="213"/>
    </location>
    <ligand>
        <name>Mg(2+)</name>
        <dbReference type="ChEBI" id="CHEBI:18420"/>
    </ligand>
</feature>
<feature type="strand" evidence="2">
    <location>
        <begin position="2"/>
        <end position="13"/>
    </location>
</feature>
<feature type="strand" evidence="2">
    <location>
        <begin position="18"/>
        <end position="21"/>
    </location>
</feature>
<feature type="strand" evidence="2">
    <location>
        <begin position="26"/>
        <end position="36"/>
    </location>
</feature>
<feature type="strand" evidence="2">
    <location>
        <begin position="39"/>
        <end position="45"/>
    </location>
</feature>
<feature type="turn" evidence="2">
    <location>
        <begin position="49"/>
        <end position="51"/>
    </location>
</feature>
<feature type="helix" evidence="2">
    <location>
        <begin position="56"/>
        <end position="71"/>
    </location>
</feature>
<feature type="helix" evidence="2">
    <location>
        <begin position="81"/>
        <end position="94"/>
    </location>
</feature>
<feature type="helix" evidence="2">
    <location>
        <begin position="114"/>
        <end position="122"/>
    </location>
</feature>
<feature type="strand" evidence="2">
    <location>
        <begin position="128"/>
        <end position="133"/>
    </location>
</feature>
<feature type="strand" evidence="2">
    <location>
        <begin position="135"/>
        <end position="137"/>
    </location>
</feature>
<feature type="helix" evidence="2">
    <location>
        <begin position="139"/>
        <end position="152"/>
    </location>
</feature>
<feature type="strand" evidence="2">
    <location>
        <begin position="156"/>
        <end position="161"/>
    </location>
</feature>
<feature type="helix" evidence="2">
    <location>
        <begin position="168"/>
        <end position="176"/>
    </location>
</feature>
<feature type="helix" evidence="2">
    <location>
        <begin position="180"/>
        <end position="183"/>
    </location>
</feature>
<feature type="strand" evidence="2">
    <location>
        <begin position="186"/>
        <end position="190"/>
    </location>
</feature>
<feature type="strand" evidence="2">
    <location>
        <begin position="193"/>
        <end position="195"/>
    </location>
</feature>
<feature type="helix" evidence="2">
    <location>
        <begin position="196"/>
        <end position="206"/>
    </location>
</feature>
<feature type="strand" evidence="2">
    <location>
        <begin position="210"/>
        <end position="213"/>
    </location>
</feature>
<feature type="helix" evidence="2">
    <location>
        <begin position="214"/>
        <end position="217"/>
    </location>
</feature>
<feature type="strand" evidence="2">
    <location>
        <begin position="229"/>
        <end position="234"/>
    </location>
</feature>
<feature type="helix" evidence="2">
    <location>
        <begin position="236"/>
        <end position="239"/>
    </location>
</feature>
<feature type="helix" evidence="2">
    <location>
        <begin position="242"/>
        <end position="254"/>
    </location>
</feature>
<feature type="strand" evidence="2">
    <location>
        <begin position="258"/>
        <end position="262"/>
    </location>
</feature>
<feature type="helix" evidence="2">
    <location>
        <begin position="268"/>
        <end position="281"/>
    </location>
</feature>
<feature type="helix" evidence="2">
    <location>
        <begin position="292"/>
        <end position="294"/>
    </location>
</feature>
<feature type="strand" evidence="2">
    <location>
        <begin position="298"/>
        <end position="301"/>
    </location>
</feature>
<feature type="helix" evidence="2">
    <location>
        <begin position="313"/>
        <end position="315"/>
    </location>
</feature>
<feature type="strand" evidence="2">
    <location>
        <begin position="316"/>
        <end position="320"/>
    </location>
</feature>
<comment type="function">
    <text evidence="1">Converts 2-succinyl-6-hydroxy-2,4-cyclohexadiene-1-carboxylate (SHCHC) to 2-succinylbenzoate (OSB).</text>
</comment>
<comment type="catalytic activity">
    <reaction evidence="1">
        <text>(1R,6R)-6-hydroxy-2-succinyl-cyclohexa-2,4-diene-1-carboxylate = 2-succinylbenzoate + H2O</text>
        <dbReference type="Rhea" id="RHEA:10196"/>
        <dbReference type="ChEBI" id="CHEBI:15377"/>
        <dbReference type="ChEBI" id="CHEBI:18325"/>
        <dbReference type="ChEBI" id="CHEBI:58689"/>
        <dbReference type="EC" id="4.2.1.113"/>
    </reaction>
</comment>
<comment type="cofactor">
    <cofactor evidence="1">
        <name>a divalent metal cation</name>
        <dbReference type="ChEBI" id="CHEBI:60240"/>
    </cofactor>
</comment>
<comment type="pathway">
    <text evidence="1">Quinol/quinone metabolism; 1,4-dihydroxy-2-naphthoate biosynthesis; 1,4-dihydroxy-2-naphthoate from chorismate: step 4/7.</text>
</comment>
<comment type="pathway">
    <text evidence="1">Quinol/quinone metabolism; menaquinone biosynthesis.</text>
</comment>
<comment type="similarity">
    <text evidence="1">Belongs to the mandelate racemase/muconate lactonizing enzyme family. MenC type 1 subfamily.</text>
</comment>